<protein>
    <recommendedName>
        <fullName>Beta-glucosidase 1</fullName>
        <ecNumber>3.2.1.21</ecNumber>
    </recommendedName>
    <alternativeName>
        <fullName>Beta-D-glucoside glucohydrolase</fullName>
    </alternativeName>
    <alternativeName>
        <fullName>Cellobiase</fullName>
    </alternativeName>
    <alternativeName>
        <fullName>Gentiobiase</fullName>
    </alternativeName>
</protein>
<evidence type="ECO:0000250" key="1"/>
<evidence type="ECO:0000255" key="2"/>
<evidence type="ECO:0000305" key="3"/>
<name>BGL1_SACFI</name>
<gene>
    <name type="primary">BGL1</name>
</gene>
<comment type="catalytic activity">
    <reaction>
        <text>Hydrolysis of terminal, non-reducing beta-D-glucosyl residues with release of beta-D-glucose.</text>
        <dbReference type="EC" id="3.2.1.21"/>
    </reaction>
</comment>
<comment type="pathway">
    <text>Glycan metabolism; cellulose degradation.</text>
</comment>
<comment type="similarity">
    <text evidence="3">Belongs to the glycosyl hydrolase 3 family.</text>
</comment>
<organism>
    <name type="scientific">Saccharomycopsis fibuligera</name>
    <name type="common">Yeast</name>
    <dbReference type="NCBI Taxonomy" id="4944"/>
    <lineage>
        <taxon>Eukaryota</taxon>
        <taxon>Fungi</taxon>
        <taxon>Dikarya</taxon>
        <taxon>Ascomycota</taxon>
        <taxon>Saccharomycotina</taxon>
        <taxon>Saccharomycetes</taxon>
        <taxon>Saccharomycopsidaceae</taxon>
        <taxon>Saccharomycopsis</taxon>
    </lineage>
</organism>
<keyword id="KW-0119">Carbohydrate metabolism</keyword>
<keyword id="KW-0136">Cellulose degradation</keyword>
<keyword id="KW-0325">Glycoprotein</keyword>
<keyword id="KW-0326">Glycosidase</keyword>
<keyword id="KW-0378">Hydrolase</keyword>
<keyword id="KW-0624">Polysaccharide degradation</keyword>
<keyword id="KW-0732">Signal</keyword>
<proteinExistence type="inferred from homology"/>
<sequence>MLMIVQLLVFALGLAVAVPIQNYTQSPSQRDESSQWVSPHYYPTPQGGRLQDVWQEAYARAKAIVGQMTIVEKVNLTTGTGWQLDPCVGNTGSVPRFGIPNLCLQDGPLGVRFADFVTGYPSGLATGATFNKDLFLQRGQALGHEFNSKGVHIALGPAVGPLGVKARGGRNFEAFGSDPYLQGTAAAATIKGLQENNVMACVKHFIGNEQEKYRQPDDINPATNQTTKEAISANIPDRAMHALYLWPFADSVRAGVGSVMCSYNRVNNTYACENSYMMNHLLKEELGFQGFVVSDWGAQLSGVYSAISGLDMSMPGEVYGGWNTGTSFWGQNLTKAIYNETVPIERLDDMATRILAALYATNSFPTEDHLPNFSSWTTKEYGNKYYADNTTEIVKVNYNVDPSNDFTEDTALKVAEESIVLLKNENNTLPISPEKAKRLLLSGIAAGPDPIGYQCEDQSCTNGALFQGWGSGSVGSPKYQVTPFEEISYLARKNKMQFDYIRESYDLAQVTKVASDAHLSIVVVSAASGEGYITVDGNQGDRKNLTLWNNGDKLIETVAENCANTVVVVTSTGQINFEGFADHPNVTAIVWAGPLGDRSGTAIANILFGKANPSGHLPFTIAKTDDDYIPIETYSPSSGEPEDNHLVENDLLVDYRYFEEKNIEPRYAFGYGLSYNEYEVSNAKVSAAKKVDEELPEPATYLSEFSYQNAKDSKNPSDAFAPADLNRVNEYLYPYLDSNVTLKDGNYEYPDGYSTEQRTTPNQPGGGLGGNDALWEVAYNSTDKFVPQGNSTDKFVPQLYLKHPEDGKFETPIQLRGFEKVELSPGEKKTVDLRLLRRDLSVWDTTRQSWIVESGTYEALIGVAVNDIKTSVLFTI</sequence>
<dbReference type="EC" id="3.2.1.21"/>
<dbReference type="EMBL" id="M22475">
    <property type="protein sequence ID" value="AAA34314.1"/>
    <property type="molecule type" value="Genomic_DNA"/>
</dbReference>
<dbReference type="PIR" id="A45956">
    <property type="entry name" value="A45956"/>
</dbReference>
<dbReference type="SMR" id="P22506"/>
<dbReference type="CAZy" id="GH3">
    <property type="family name" value="Glycoside Hydrolase Family 3"/>
</dbReference>
<dbReference type="GlyCosmos" id="P22506">
    <property type="glycosylation" value="14 sites, No reported glycans"/>
</dbReference>
<dbReference type="UniPathway" id="UPA00696"/>
<dbReference type="GO" id="GO:0008422">
    <property type="term" value="F:beta-glucosidase activity"/>
    <property type="evidence" value="ECO:0007669"/>
    <property type="project" value="UniProtKB-EC"/>
</dbReference>
<dbReference type="GO" id="GO:0030245">
    <property type="term" value="P:cellulose catabolic process"/>
    <property type="evidence" value="ECO:0007669"/>
    <property type="project" value="UniProtKB-UniPathway"/>
</dbReference>
<dbReference type="FunFam" id="3.20.20.300:FF:000002">
    <property type="entry name" value="Probable beta-glucosidase"/>
    <property type="match status" value="1"/>
</dbReference>
<dbReference type="FunFam" id="3.40.50.1700:FF:000003">
    <property type="entry name" value="Probable beta-glucosidase"/>
    <property type="match status" value="1"/>
</dbReference>
<dbReference type="Gene3D" id="3.40.50.1700">
    <property type="entry name" value="Glycoside hydrolase family 3 C-terminal domain"/>
    <property type="match status" value="1"/>
</dbReference>
<dbReference type="Gene3D" id="3.20.20.300">
    <property type="entry name" value="Glycoside hydrolase, family 3, N-terminal domain"/>
    <property type="match status" value="1"/>
</dbReference>
<dbReference type="Gene3D" id="2.60.40.10">
    <property type="entry name" value="Immunoglobulins"/>
    <property type="match status" value="1"/>
</dbReference>
<dbReference type="InterPro" id="IPR050288">
    <property type="entry name" value="Cellulose_deg_GH3"/>
</dbReference>
<dbReference type="InterPro" id="IPR026891">
    <property type="entry name" value="Fn3-like"/>
</dbReference>
<dbReference type="InterPro" id="IPR019800">
    <property type="entry name" value="Glyco_hydro_3_AS"/>
</dbReference>
<dbReference type="InterPro" id="IPR002772">
    <property type="entry name" value="Glyco_hydro_3_C"/>
</dbReference>
<dbReference type="InterPro" id="IPR036881">
    <property type="entry name" value="Glyco_hydro_3_C_sf"/>
</dbReference>
<dbReference type="InterPro" id="IPR001764">
    <property type="entry name" value="Glyco_hydro_3_N"/>
</dbReference>
<dbReference type="InterPro" id="IPR036962">
    <property type="entry name" value="Glyco_hydro_3_N_sf"/>
</dbReference>
<dbReference type="InterPro" id="IPR017853">
    <property type="entry name" value="Glycoside_hydrolase_SF"/>
</dbReference>
<dbReference type="InterPro" id="IPR013783">
    <property type="entry name" value="Ig-like_fold"/>
</dbReference>
<dbReference type="PANTHER" id="PTHR42715">
    <property type="entry name" value="BETA-GLUCOSIDASE"/>
    <property type="match status" value="1"/>
</dbReference>
<dbReference type="PANTHER" id="PTHR42715:SF2">
    <property type="entry name" value="BETA-GLUCOSIDASE F-RELATED"/>
    <property type="match status" value="1"/>
</dbReference>
<dbReference type="Pfam" id="PF14310">
    <property type="entry name" value="Fn3-like"/>
    <property type="match status" value="1"/>
</dbReference>
<dbReference type="Pfam" id="PF00933">
    <property type="entry name" value="Glyco_hydro_3"/>
    <property type="match status" value="1"/>
</dbReference>
<dbReference type="Pfam" id="PF01915">
    <property type="entry name" value="Glyco_hydro_3_C"/>
    <property type="match status" value="1"/>
</dbReference>
<dbReference type="PRINTS" id="PR00133">
    <property type="entry name" value="GLHYDRLASE3"/>
</dbReference>
<dbReference type="SMART" id="SM01217">
    <property type="entry name" value="Fn3_like"/>
    <property type="match status" value="1"/>
</dbReference>
<dbReference type="SUPFAM" id="SSF51445">
    <property type="entry name" value="(Trans)glycosidases"/>
    <property type="match status" value="1"/>
</dbReference>
<dbReference type="SUPFAM" id="SSF52279">
    <property type="entry name" value="Beta-D-glucan exohydrolase, C-terminal domain"/>
    <property type="match status" value="1"/>
</dbReference>
<dbReference type="PROSITE" id="PS00775">
    <property type="entry name" value="GLYCOSYL_HYDROL_F3"/>
    <property type="match status" value="1"/>
</dbReference>
<feature type="signal peptide">
    <location>
        <begin position="1"/>
        <end position="17"/>
    </location>
</feature>
<feature type="chain" id="PRO_0000011779" description="Beta-glucosidase 1">
    <location>
        <begin position="18"/>
        <end position="876"/>
    </location>
</feature>
<feature type="active site" evidence="1">
    <location>
        <position position="295"/>
    </location>
</feature>
<feature type="glycosylation site" description="N-linked (GlcNAc...) asparagine" evidence="2">
    <location>
        <position position="22"/>
    </location>
</feature>
<feature type="glycosylation site" description="N-linked (GlcNAc...) asparagine" evidence="2">
    <location>
        <position position="75"/>
    </location>
</feature>
<feature type="glycosylation site" description="N-linked (GlcNAc...) asparagine" evidence="2">
    <location>
        <position position="224"/>
    </location>
</feature>
<feature type="glycosylation site" description="N-linked (GlcNAc...) asparagine" evidence="2">
    <location>
        <position position="267"/>
    </location>
</feature>
<feature type="glycosylation site" description="N-linked (GlcNAc...) asparagine" evidence="2">
    <location>
        <position position="332"/>
    </location>
</feature>
<feature type="glycosylation site" description="N-linked (GlcNAc...) asparagine" evidence="2">
    <location>
        <position position="339"/>
    </location>
</feature>
<feature type="glycosylation site" description="N-linked (GlcNAc...) asparagine" evidence="2">
    <location>
        <position position="372"/>
    </location>
</feature>
<feature type="glycosylation site" description="N-linked (GlcNAc...) asparagine" evidence="2">
    <location>
        <position position="389"/>
    </location>
</feature>
<feature type="glycosylation site" description="N-linked (GlcNAc...) asparagine" evidence="2">
    <location>
        <position position="426"/>
    </location>
</feature>
<feature type="glycosylation site" description="N-linked (GlcNAc...) asparagine" evidence="2">
    <location>
        <position position="544"/>
    </location>
</feature>
<feature type="glycosylation site" description="N-linked (GlcNAc...) asparagine" evidence="2">
    <location>
        <position position="585"/>
    </location>
</feature>
<feature type="glycosylation site" description="N-linked (GlcNAc...) asparagine" evidence="2">
    <location>
        <position position="739"/>
    </location>
</feature>
<feature type="glycosylation site" description="N-linked (GlcNAc...) asparagine" evidence="2">
    <location>
        <position position="780"/>
    </location>
</feature>
<feature type="glycosylation site" description="N-linked (GlcNAc...) asparagine" evidence="2">
    <location>
        <position position="790"/>
    </location>
</feature>
<accession>P22506</accession>
<reference key="1">
    <citation type="journal article" date="1988" name="Appl. Environ. Microbiol.">
        <title>Nucleotide sequences of Saccharomycopsis fibuligera genes for extracellular beta-glucosidases as expressed in Saccharomyces cerevisiae.</title>
        <authorList>
            <person name="Machida M."/>
            <person name="Ohtsuki I."/>
            <person name="Fukui S."/>
            <person name="Yamashita I."/>
        </authorList>
    </citation>
    <scope>NUCLEOTIDE SEQUENCE [GENOMIC DNA]</scope>
</reference>